<accession>P34874</accession>
<dbReference type="EMBL" id="L08041">
    <property type="protein sequence ID" value="AAA32067.1"/>
    <property type="molecule type" value="Genomic_DNA"/>
</dbReference>
<dbReference type="SMR" id="P34874"/>
<dbReference type="GO" id="GO:0005743">
    <property type="term" value="C:mitochondrial inner membrane"/>
    <property type="evidence" value="ECO:0007669"/>
    <property type="project" value="UniProtKB-SubCell"/>
</dbReference>
<dbReference type="GO" id="GO:0045275">
    <property type="term" value="C:respiratory chain complex III"/>
    <property type="evidence" value="ECO:0007669"/>
    <property type="project" value="InterPro"/>
</dbReference>
<dbReference type="GO" id="GO:0046872">
    <property type="term" value="F:metal ion binding"/>
    <property type="evidence" value="ECO:0007669"/>
    <property type="project" value="UniProtKB-KW"/>
</dbReference>
<dbReference type="GO" id="GO:0008121">
    <property type="term" value="F:ubiquinol-cytochrome-c reductase activity"/>
    <property type="evidence" value="ECO:0007669"/>
    <property type="project" value="InterPro"/>
</dbReference>
<dbReference type="GO" id="GO:0006122">
    <property type="term" value="P:mitochondrial electron transport, ubiquinol to cytochrome c"/>
    <property type="evidence" value="ECO:0007669"/>
    <property type="project" value="TreeGrafter"/>
</dbReference>
<dbReference type="CDD" id="cd00290">
    <property type="entry name" value="cytochrome_b_C"/>
    <property type="match status" value="1"/>
</dbReference>
<dbReference type="CDD" id="cd00284">
    <property type="entry name" value="Cytochrome_b_N"/>
    <property type="match status" value="1"/>
</dbReference>
<dbReference type="FunFam" id="1.20.810.10:FF:000002">
    <property type="entry name" value="Cytochrome b"/>
    <property type="match status" value="1"/>
</dbReference>
<dbReference type="Gene3D" id="1.20.810.10">
    <property type="entry name" value="Cytochrome Bc1 Complex, Chain C"/>
    <property type="match status" value="1"/>
</dbReference>
<dbReference type="InterPro" id="IPR005798">
    <property type="entry name" value="Cyt_b/b6_C"/>
</dbReference>
<dbReference type="InterPro" id="IPR036150">
    <property type="entry name" value="Cyt_b/b6_C_sf"/>
</dbReference>
<dbReference type="InterPro" id="IPR005797">
    <property type="entry name" value="Cyt_b/b6_N"/>
</dbReference>
<dbReference type="InterPro" id="IPR027387">
    <property type="entry name" value="Cytb/b6-like_sf"/>
</dbReference>
<dbReference type="InterPro" id="IPR030689">
    <property type="entry name" value="Cytochrome_b"/>
</dbReference>
<dbReference type="InterPro" id="IPR048260">
    <property type="entry name" value="Cytochrome_b_C_euk/bac"/>
</dbReference>
<dbReference type="InterPro" id="IPR048259">
    <property type="entry name" value="Cytochrome_b_N_euk/bac"/>
</dbReference>
<dbReference type="InterPro" id="IPR016174">
    <property type="entry name" value="Di-haem_cyt_TM"/>
</dbReference>
<dbReference type="PANTHER" id="PTHR19271">
    <property type="entry name" value="CYTOCHROME B"/>
    <property type="match status" value="1"/>
</dbReference>
<dbReference type="PANTHER" id="PTHR19271:SF16">
    <property type="entry name" value="CYTOCHROME B"/>
    <property type="match status" value="1"/>
</dbReference>
<dbReference type="Pfam" id="PF00032">
    <property type="entry name" value="Cytochrom_B_C"/>
    <property type="match status" value="1"/>
</dbReference>
<dbReference type="Pfam" id="PF00033">
    <property type="entry name" value="Cytochrome_B"/>
    <property type="match status" value="1"/>
</dbReference>
<dbReference type="PIRSF" id="PIRSF038885">
    <property type="entry name" value="COB"/>
    <property type="match status" value="1"/>
</dbReference>
<dbReference type="SUPFAM" id="SSF81648">
    <property type="entry name" value="a domain/subunit of cytochrome bc1 complex (Ubiquinol-cytochrome c reductase)"/>
    <property type="match status" value="1"/>
</dbReference>
<dbReference type="SUPFAM" id="SSF81342">
    <property type="entry name" value="Transmembrane di-heme cytochromes"/>
    <property type="match status" value="1"/>
</dbReference>
<dbReference type="PROSITE" id="PS51003">
    <property type="entry name" value="CYTB_CTER"/>
    <property type="match status" value="1"/>
</dbReference>
<dbReference type="PROSITE" id="PS51002">
    <property type="entry name" value="CYTB_NTER"/>
    <property type="match status" value="1"/>
</dbReference>
<keyword id="KW-0249">Electron transport</keyword>
<keyword id="KW-0349">Heme</keyword>
<keyword id="KW-0408">Iron</keyword>
<keyword id="KW-0472">Membrane</keyword>
<keyword id="KW-0479">Metal-binding</keyword>
<keyword id="KW-0496">Mitochondrion</keyword>
<keyword id="KW-0999">Mitochondrion inner membrane</keyword>
<keyword id="KW-0679">Respiratory chain</keyword>
<keyword id="KW-0812">Transmembrane</keyword>
<keyword id="KW-1133">Transmembrane helix</keyword>
<keyword id="KW-0813">Transport</keyword>
<keyword id="KW-0830">Ubiquinone</keyword>
<evidence type="ECO:0000250" key="1"/>
<evidence type="ECO:0000250" key="2">
    <source>
        <dbReference type="UniProtKB" id="P00157"/>
    </source>
</evidence>
<evidence type="ECO:0000255" key="3">
    <source>
        <dbReference type="PROSITE-ProRule" id="PRU00967"/>
    </source>
</evidence>
<evidence type="ECO:0000255" key="4">
    <source>
        <dbReference type="PROSITE-ProRule" id="PRU00968"/>
    </source>
</evidence>
<protein>
    <recommendedName>
        <fullName>Cytochrome b</fullName>
    </recommendedName>
    <alternativeName>
        <fullName>Complex III subunit 3</fullName>
    </alternativeName>
    <alternativeName>
        <fullName>Complex III subunit III</fullName>
    </alternativeName>
    <alternativeName>
        <fullName>Cytochrome b-c1 complex subunit 3</fullName>
    </alternativeName>
    <alternativeName>
        <fullName>Ubiquinol-cytochrome-c reductase complex cytochrome b subunit</fullName>
    </alternativeName>
</protein>
<name>CYB_SPHLE</name>
<comment type="function">
    <text evidence="2">Component of the ubiquinol-cytochrome c reductase complex (complex III or cytochrome b-c1 complex) that is part of the mitochondrial respiratory chain. The b-c1 complex mediates electron transfer from ubiquinol to cytochrome c. Contributes to the generation of a proton gradient across the mitochondrial membrane that is then used for ATP synthesis.</text>
</comment>
<comment type="cofactor">
    <cofactor evidence="2">
        <name>heme b</name>
        <dbReference type="ChEBI" id="CHEBI:60344"/>
    </cofactor>
    <text evidence="2">Binds 2 heme b groups non-covalently.</text>
</comment>
<comment type="subunit">
    <text evidence="2">The cytochrome bc1 complex contains 3 respiratory subunits (MT-CYB, CYC1 and UQCRFS1), 2 core proteins (UQCRC1 and UQCRC2) and probably 6 low-molecular weight proteins.</text>
</comment>
<comment type="subcellular location">
    <subcellularLocation>
        <location evidence="2">Mitochondrion inner membrane</location>
        <topology evidence="2">Multi-pass membrane protein</topology>
    </subcellularLocation>
</comment>
<comment type="miscellaneous">
    <text evidence="1">Heme 1 (or BL or b562) is low-potential and absorbs at about 562 nm, and heme 2 (or BH or b566) is high-potential and absorbs at about 566 nm.</text>
</comment>
<comment type="similarity">
    <text evidence="3 4">Belongs to the cytochrome b family.</text>
</comment>
<comment type="caution">
    <text evidence="2">The full-length protein contains only eight transmembrane helices, not nine as predicted by bioinformatics tools.</text>
</comment>
<proteinExistence type="inferred from homology"/>
<geneLocation type="mitochondrion"/>
<organism>
    <name type="scientific">Sphyrna lewini</name>
    <name type="common">Scalloped hammerhead shark</name>
    <name type="synonym">Zygaena lewini</name>
    <dbReference type="NCBI Taxonomy" id="7823"/>
    <lineage>
        <taxon>Eukaryota</taxon>
        <taxon>Metazoa</taxon>
        <taxon>Chordata</taxon>
        <taxon>Craniata</taxon>
        <taxon>Vertebrata</taxon>
        <taxon>Chondrichthyes</taxon>
        <taxon>Elasmobranchii</taxon>
        <taxon>Galeomorphii</taxon>
        <taxon>Galeoidea</taxon>
        <taxon>Carcharhiniformes</taxon>
        <taxon>Carcharhinidae</taxon>
        <taxon>Sphyrna</taxon>
    </lineage>
</organism>
<feature type="chain" id="PRO_0000061606" description="Cytochrome b">
    <location>
        <begin position="1"/>
        <end position="381"/>
    </location>
</feature>
<feature type="transmembrane region" description="Helical" evidence="2">
    <location>
        <begin position="34"/>
        <end position="54"/>
    </location>
</feature>
<feature type="transmembrane region" description="Helical" evidence="2">
    <location>
        <begin position="78"/>
        <end position="99"/>
    </location>
</feature>
<feature type="transmembrane region" description="Helical" evidence="2">
    <location>
        <begin position="114"/>
        <end position="134"/>
    </location>
</feature>
<feature type="transmembrane region" description="Helical" evidence="2">
    <location>
        <begin position="179"/>
        <end position="199"/>
    </location>
</feature>
<feature type="transmembrane region" description="Helical" evidence="2">
    <location>
        <begin position="227"/>
        <end position="247"/>
    </location>
</feature>
<feature type="transmembrane region" description="Helical" evidence="2">
    <location>
        <begin position="289"/>
        <end position="309"/>
    </location>
</feature>
<feature type="transmembrane region" description="Helical" evidence="2">
    <location>
        <begin position="321"/>
        <end position="341"/>
    </location>
</feature>
<feature type="transmembrane region" description="Helical" evidence="2">
    <location>
        <begin position="348"/>
        <end position="368"/>
    </location>
</feature>
<feature type="binding site" description="axial binding residue" evidence="2">
    <location>
        <position position="84"/>
    </location>
    <ligand>
        <name>heme b</name>
        <dbReference type="ChEBI" id="CHEBI:60344"/>
        <label>b562</label>
    </ligand>
    <ligandPart>
        <name>Fe</name>
        <dbReference type="ChEBI" id="CHEBI:18248"/>
    </ligandPart>
</feature>
<feature type="binding site" description="axial binding residue" evidence="2">
    <location>
        <position position="98"/>
    </location>
    <ligand>
        <name>heme b</name>
        <dbReference type="ChEBI" id="CHEBI:60344"/>
        <label>b566</label>
    </ligand>
    <ligandPart>
        <name>Fe</name>
        <dbReference type="ChEBI" id="CHEBI:18248"/>
    </ligandPart>
</feature>
<feature type="binding site" description="axial binding residue" evidence="2">
    <location>
        <position position="183"/>
    </location>
    <ligand>
        <name>heme b</name>
        <dbReference type="ChEBI" id="CHEBI:60344"/>
        <label>b562</label>
    </ligand>
    <ligandPart>
        <name>Fe</name>
        <dbReference type="ChEBI" id="CHEBI:18248"/>
    </ligandPart>
</feature>
<feature type="binding site" description="axial binding residue" evidence="2">
    <location>
        <position position="197"/>
    </location>
    <ligand>
        <name>heme b</name>
        <dbReference type="ChEBI" id="CHEBI:60344"/>
        <label>b566</label>
    </ligand>
    <ligandPart>
        <name>Fe</name>
        <dbReference type="ChEBI" id="CHEBI:18248"/>
    </ligandPart>
</feature>
<feature type="binding site" evidence="2">
    <location>
        <position position="202"/>
    </location>
    <ligand>
        <name>a ubiquinone</name>
        <dbReference type="ChEBI" id="CHEBI:16389"/>
    </ligand>
</feature>
<gene>
    <name type="primary">mt-cyb</name>
    <name type="synonym">cob</name>
    <name type="synonym">cytb</name>
    <name type="synonym">mtcyb</name>
</gene>
<sequence length="381" mass="43285">MAIFIRKMHPLLKIMNHALVDLPAPSNISLWWNFGSLLGLCLIIQILTGLFLAMHYTADVSMAFSSVVHICRDVNYGWLIRNIHANGASLFFICVYLHIARGLYYGSYLYKETWNIGVILLFLLMATAFVGYVLPWGQMSFWGATVITNLLSAFPYIGNMLVQWIWGGFSVDNATLTRFFAFHFLLPFLILALTVIHLLFLHETGSNNPLGINSDADKISFHPYFSYKDLLGFFVMIFFLTTLALFMPNLLGDAENFIPANPLVTPPHIKPEWYFLFAYAILRSIPNKLGGVLALLFSIFILMLVPLLHTSKQRSNIFRPLTQIFFWLLVANSIILTWIGGQPVEQPFITVGQIASISYFSLFLIIMPFASWCENKILSLN</sequence>
<reference key="1">
    <citation type="journal article" date="1992" name="Nature">
        <title>Rates of mitochondrial DNA evolution in sharks are slow compared with mammals.</title>
        <authorList>
            <person name="Martin A.P."/>
            <person name="Naylor G.J.P."/>
            <person name="Palumbi S.R."/>
        </authorList>
    </citation>
    <scope>NUCLEOTIDE SEQUENCE [GENOMIC DNA]</scope>
</reference>